<keyword id="KW-0028">Amino-acid biosynthesis</keyword>
<keyword id="KW-0170">Cobalt</keyword>
<keyword id="KW-0220">Diaminopimelate biosynthesis</keyword>
<keyword id="KW-0378">Hydrolase</keyword>
<keyword id="KW-0457">Lysine biosynthesis</keyword>
<keyword id="KW-0479">Metal-binding</keyword>
<keyword id="KW-1185">Reference proteome</keyword>
<keyword id="KW-0862">Zinc</keyword>
<feature type="chain" id="PRO_0000375764" description="Succinyl-diaminopimelate desuccinylase">
    <location>
        <begin position="1"/>
        <end position="401"/>
    </location>
</feature>
<feature type="active site" evidence="1">
    <location>
        <position position="84"/>
    </location>
</feature>
<feature type="active site" description="Proton acceptor" evidence="1">
    <location>
        <position position="149"/>
    </location>
</feature>
<feature type="binding site" evidence="1">
    <location>
        <position position="82"/>
    </location>
    <ligand>
        <name>Zn(2+)</name>
        <dbReference type="ChEBI" id="CHEBI:29105"/>
        <label>1</label>
    </ligand>
</feature>
<feature type="binding site" evidence="1">
    <location>
        <position position="115"/>
    </location>
    <ligand>
        <name>Zn(2+)</name>
        <dbReference type="ChEBI" id="CHEBI:29105"/>
        <label>1</label>
    </ligand>
</feature>
<feature type="binding site" evidence="1">
    <location>
        <position position="115"/>
    </location>
    <ligand>
        <name>Zn(2+)</name>
        <dbReference type="ChEBI" id="CHEBI:29105"/>
        <label>2</label>
    </ligand>
</feature>
<feature type="binding site" evidence="1">
    <location>
        <position position="150"/>
    </location>
    <ligand>
        <name>Zn(2+)</name>
        <dbReference type="ChEBI" id="CHEBI:29105"/>
        <label>2</label>
    </ligand>
</feature>
<feature type="binding site" evidence="1">
    <location>
        <position position="178"/>
    </location>
    <ligand>
        <name>Zn(2+)</name>
        <dbReference type="ChEBI" id="CHEBI:29105"/>
        <label>1</label>
    </ligand>
</feature>
<feature type="binding site" evidence="1">
    <location>
        <position position="364"/>
    </location>
    <ligand>
        <name>Zn(2+)</name>
        <dbReference type="ChEBI" id="CHEBI:29105"/>
        <label>2</label>
    </ligand>
</feature>
<accession>A1WEL1</accession>
<comment type="function">
    <text evidence="1">Catalyzes the hydrolysis of N-succinyl-L,L-diaminopimelic acid (SDAP), forming succinate and LL-2,6-diaminopimelate (DAP), an intermediate involved in the bacterial biosynthesis of lysine and meso-diaminopimelic acid, an essential component of bacterial cell walls.</text>
</comment>
<comment type="catalytic activity">
    <reaction evidence="1">
        <text>N-succinyl-(2S,6S)-2,6-diaminopimelate + H2O = (2S,6S)-2,6-diaminopimelate + succinate</text>
        <dbReference type="Rhea" id="RHEA:22608"/>
        <dbReference type="ChEBI" id="CHEBI:15377"/>
        <dbReference type="ChEBI" id="CHEBI:30031"/>
        <dbReference type="ChEBI" id="CHEBI:57609"/>
        <dbReference type="ChEBI" id="CHEBI:58087"/>
        <dbReference type="EC" id="3.5.1.18"/>
    </reaction>
</comment>
<comment type="cofactor">
    <cofactor evidence="1">
        <name>Zn(2+)</name>
        <dbReference type="ChEBI" id="CHEBI:29105"/>
    </cofactor>
    <cofactor evidence="1">
        <name>Co(2+)</name>
        <dbReference type="ChEBI" id="CHEBI:48828"/>
    </cofactor>
    <text evidence="1">Binds 2 Zn(2+) or Co(2+) ions per subunit.</text>
</comment>
<comment type="pathway">
    <text evidence="1">Amino-acid biosynthesis; L-lysine biosynthesis via DAP pathway; LL-2,6-diaminopimelate from (S)-tetrahydrodipicolinate (succinylase route): step 3/3.</text>
</comment>
<comment type="subunit">
    <text evidence="1">Homodimer.</text>
</comment>
<comment type="similarity">
    <text evidence="1">Belongs to the peptidase M20A family. DapE subfamily.</text>
</comment>
<reference key="1">
    <citation type="submission" date="2006-12" db="EMBL/GenBank/DDBJ databases">
        <title>Complete sequence of chromosome 1 of Verminephrobacter eiseniae EF01-2.</title>
        <authorList>
            <person name="Copeland A."/>
            <person name="Lucas S."/>
            <person name="Lapidus A."/>
            <person name="Barry K."/>
            <person name="Detter J.C."/>
            <person name="Glavina del Rio T."/>
            <person name="Dalin E."/>
            <person name="Tice H."/>
            <person name="Pitluck S."/>
            <person name="Chertkov O."/>
            <person name="Brettin T."/>
            <person name="Bruce D."/>
            <person name="Han C."/>
            <person name="Tapia R."/>
            <person name="Gilna P."/>
            <person name="Schmutz J."/>
            <person name="Larimer F."/>
            <person name="Land M."/>
            <person name="Hauser L."/>
            <person name="Kyrpides N."/>
            <person name="Kim E."/>
            <person name="Stahl D."/>
            <person name="Richardson P."/>
        </authorList>
    </citation>
    <scope>NUCLEOTIDE SEQUENCE [LARGE SCALE GENOMIC DNA]</scope>
    <source>
        <strain>EF01-2</strain>
    </source>
</reference>
<gene>
    <name evidence="1" type="primary">dapE</name>
    <name type="ordered locus">Veis_0277</name>
</gene>
<proteinExistence type="inferred from homology"/>
<name>DAPE_VEREI</name>
<protein>
    <recommendedName>
        <fullName evidence="1">Succinyl-diaminopimelate desuccinylase</fullName>
        <shortName evidence="1">SDAP desuccinylase</shortName>
        <ecNumber evidence="1">3.5.1.18</ecNumber>
    </recommendedName>
    <alternativeName>
        <fullName evidence="1">N-succinyl-LL-2,6-diaminoheptanedioate amidohydrolase</fullName>
    </alternativeName>
</protein>
<sequence>MTRTLHLAEQLIARPSITPDDAGCLDLLAARLAPLGFVCERMDSGPARQRVSNLWAKRPVAQVPDAHDASKTAVKTIVFAGHTDVVPTGPLEQWSSNPFLPTRRDGRLYGRGASDMKTSIAAFIVALEEFLAATPEPRIALALLLTSDEEGPSVDGTRVVVEQLKARGDSIDYCIVGEPTAVEKTGDMVKNGRRGTLSGRLLVRGIQGHIAYPQLARNPIHQALPALAELAATEWDQGNEFFPPTSWQISNLHAGTGATNVIPGEMVLDFNFRFSTQSCAEGLQRHVQQLLERHGLSYELHWTLGGQPFLTTPGELLQAVEQAISAETGLSAALSTTGGTSDGRFIAHICPQVIELGPPNASVHKIDEHVLLTDIEALKNIYRRTLENLQAQALAAATMPA</sequence>
<organism>
    <name type="scientific">Verminephrobacter eiseniae (strain EF01-2)</name>
    <dbReference type="NCBI Taxonomy" id="391735"/>
    <lineage>
        <taxon>Bacteria</taxon>
        <taxon>Pseudomonadati</taxon>
        <taxon>Pseudomonadota</taxon>
        <taxon>Betaproteobacteria</taxon>
        <taxon>Burkholderiales</taxon>
        <taxon>Comamonadaceae</taxon>
        <taxon>Verminephrobacter</taxon>
    </lineage>
</organism>
<evidence type="ECO:0000255" key="1">
    <source>
        <dbReference type="HAMAP-Rule" id="MF_01690"/>
    </source>
</evidence>
<dbReference type="EC" id="3.5.1.18" evidence="1"/>
<dbReference type="EMBL" id="CP000542">
    <property type="protein sequence ID" value="ABM56068.1"/>
    <property type="molecule type" value="Genomic_DNA"/>
</dbReference>
<dbReference type="RefSeq" id="WP_011808087.1">
    <property type="nucleotide sequence ID" value="NC_008786.1"/>
</dbReference>
<dbReference type="SMR" id="A1WEL1"/>
<dbReference type="STRING" id="391735.Veis_0277"/>
<dbReference type="GeneID" id="76459018"/>
<dbReference type="KEGG" id="vei:Veis_0277"/>
<dbReference type="eggNOG" id="COG0624">
    <property type="taxonomic scope" value="Bacteria"/>
</dbReference>
<dbReference type="HOGENOM" id="CLU_021802_4_0_4"/>
<dbReference type="OrthoDB" id="9809784at2"/>
<dbReference type="UniPathway" id="UPA00034">
    <property type="reaction ID" value="UER00021"/>
</dbReference>
<dbReference type="Proteomes" id="UP000000374">
    <property type="component" value="Chromosome"/>
</dbReference>
<dbReference type="GO" id="GO:0008777">
    <property type="term" value="F:acetylornithine deacetylase activity"/>
    <property type="evidence" value="ECO:0007669"/>
    <property type="project" value="TreeGrafter"/>
</dbReference>
<dbReference type="GO" id="GO:0050897">
    <property type="term" value="F:cobalt ion binding"/>
    <property type="evidence" value="ECO:0007669"/>
    <property type="project" value="UniProtKB-UniRule"/>
</dbReference>
<dbReference type="GO" id="GO:0009014">
    <property type="term" value="F:succinyl-diaminopimelate desuccinylase activity"/>
    <property type="evidence" value="ECO:0007669"/>
    <property type="project" value="UniProtKB-UniRule"/>
</dbReference>
<dbReference type="GO" id="GO:0008270">
    <property type="term" value="F:zinc ion binding"/>
    <property type="evidence" value="ECO:0007669"/>
    <property type="project" value="UniProtKB-UniRule"/>
</dbReference>
<dbReference type="GO" id="GO:0019877">
    <property type="term" value="P:diaminopimelate biosynthetic process"/>
    <property type="evidence" value="ECO:0007669"/>
    <property type="project" value="UniProtKB-UniRule"/>
</dbReference>
<dbReference type="GO" id="GO:0006526">
    <property type="term" value="P:L-arginine biosynthetic process"/>
    <property type="evidence" value="ECO:0007669"/>
    <property type="project" value="TreeGrafter"/>
</dbReference>
<dbReference type="GO" id="GO:0009089">
    <property type="term" value="P:lysine biosynthetic process via diaminopimelate"/>
    <property type="evidence" value="ECO:0007669"/>
    <property type="project" value="UniProtKB-UniRule"/>
</dbReference>
<dbReference type="CDD" id="cd03891">
    <property type="entry name" value="M20_DapE_proteobac"/>
    <property type="match status" value="1"/>
</dbReference>
<dbReference type="FunFam" id="3.30.70.360:FF:000011">
    <property type="entry name" value="Succinyl-diaminopimelate desuccinylase"/>
    <property type="match status" value="1"/>
</dbReference>
<dbReference type="Gene3D" id="3.30.70.360">
    <property type="match status" value="1"/>
</dbReference>
<dbReference type="Gene3D" id="3.40.630.10">
    <property type="entry name" value="Zn peptidases"/>
    <property type="match status" value="2"/>
</dbReference>
<dbReference type="HAMAP" id="MF_01690">
    <property type="entry name" value="DapE"/>
    <property type="match status" value="1"/>
</dbReference>
<dbReference type="InterPro" id="IPR036264">
    <property type="entry name" value="Bact_exopeptidase_dim_dom"/>
</dbReference>
<dbReference type="InterPro" id="IPR005941">
    <property type="entry name" value="DapE_proteobac"/>
</dbReference>
<dbReference type="InterPro" id="IPR002933">
    <property type="entry name" value="Peptidase_M20"/>
</dbReference>
<dbReference type="InterPro" id="IPR011650">
    <property type="entry name" value="Peptidase_M20_dimer"/>
</dbReference>
<dbReference type="InterPro" id="IPR050072">
    <property type="entry name" value="Peptidase_M20A"/>
</dbReference>
<dbReference type="NCBIfam" id="TIGR01246">
    <property type="entry name" value="dapE_proteo"/>
    <property type="match status" value="1"/>
</dbReference>
<dbReference type="NCBIfam" id="NF009557">
    <property type="entry name" value="PRK13009.1"/>
    <property type="match status" value="1"/>
</dbReference>
<dbReference type="PANTHER" id="PTHR43808">
    <property type="entry name" value="ACETYLORNITHINE DEACETYLASE"/>
    <property type="match status" value="1"/>
</dbReference>
<dbReference type="PANTHER" id="PTHR43808:SF31">
    <property type="entry name" value="N-ACETYL-L-CITRULLINE DEACETYLASE"/>
    <property type="match status" value="1"/>
</dbReference>
<dbReference type="Pfam" id="PF07687">
    <property type="entry name" value="M20_dimer"/>
    <property type="match status" value="1"/>
</dbReference>
<dbReference type="Pfam" id="PF01546">
    <property type="entry name" value="Peptidase_M20"/>
    <property type="match status" value="1"/>
</dbReference>
<dbReference type="SUPFAM" id="SSF55031">
    <property type="entry name" value="Bacterial exopeptidase dimerisation domain"/>
    <property type="match status" value="1"/>
</dbReference>
<dbReference type="SUPFAM" id="SSF53187">
    <property type="entry name" value="Zn-dependent exopeptidases"/>
    <property type="match status" value="1"/>
</dbReference>